<name>GRD2I_DANRE</name>
<reference key="1">
    <citation type="journal article" date="2013" name="Nature">
        <title>The zebrafish reference genome sequence and its relationship to the human genome.</title>
        <authorList>
            <person name="Howe K."/>
            <person name="Clark M.D."/>
            <person name="Torroja C.F."/>
            <person name="Torrance J."/>
            <person name="Berthelot C."/>
            <person name="Muffato M."/>
            <person name="Collins J.E."/>
            <person name="Humphray S."/>
            <person name="McLaren K."/>
            <person name="Matthews L."/>
            <person name="McLaren S."/>
            <person name="Sealy I."/>
            <person name="Caccamo M."/>
            <person name="Churcher C."/>
            <person name="Scott C."/>
            <person name="Barrett J.C."/>
            <person name="Koch R."/>
            <person name="Rauch G.J."/>
            <person name="White S."/>
            <person name="Chow W."/>
            <person name="Kilian B."/>
            <person name="Quintais L.T."/>
            <person name="Guerra-Assuncao J.A."/>
            <person name="Zhou Y."/>
            <person name="Gu Y."/>
            <person name="Yen J."/>
            <person name="Vogel J.H."/>
            <person name="Eyre T."/>
            <person name="Redmond S."/>
            <person name="Banerjee R."/>
            <person name="Chi J."/>
            <person name="Fu B."/>
            <person name="Langley E."/>
            <person name="Maguire S.F."/>
            <person name="Laird G.K."/>
            <person name="Lloyd D."/>
            <person name="Kenyon E."/>
            <person name="Donaldson S."/>
            <person name="Sehra H."/>
            <person name="Almeida-King J."/>
            <person name="Loveland J."/>
            <person name="Trevanion S."/>
            <person name="Jones M."/>
            <person name="Quail M."/>
            <person name="Willey D."/>
            <person name="Hunt A."/>
            <person name="Burton J."/>
            <person name="Sims S."/>
            <person name="McLay K."/>
            <person name="Plumb B."/>
            <person name="Davis J."/>
            <person name="Clee C."/>
            <person name="Oliver K."/>
            <person name="Clark R."/>
            <person name="Riddle C."/>
            <person name="Elliot D."/>
            <person name="Threadgold G."/>
            <person name="Harden G."/>
            <person name="Ware D."/>
            <person name="Begum S."/>
            <person name="Mortimore B."/>
            <person name="Kerry G."/>
            <person name="Heath P."/>
            <person name="Phillimore B."/>
            <person name="Tracey A."/>
            <person name="Corby N."/>
            <person name="Dunn M."/>
            <person name="Johnson C."/>
            <person name="Wood J."/>
            <person name="Clark S."/>
            <person name="Pelan S."/>
            <person name="Griffiths G."/>
            <person name="Smith M."/>
            <person name="Glithero R."/>
            <person name="Howden P."/>
            <person name="Barker N."/>
            <person name="Lloyd C."/>
            <person name="Stevens C."/>
            <person name="Harley J."/>
            <person name="Holt K."/>
            <person name="Panagiotidis G."/>
            <person name="Lovell J."/>
            <person name="Beasley H."/>
            <person name="Henderson C."/>
            <person name="Gordon D."/>
            <person name="Auger K."/>
            <person name="Wright D."/>
            <person name="Collins J."/>
            <person name="Raisen C."/>
            <person name="Dyer L."/>
            <person name="Leung K."/>
            <person name="Robertson L."/>
            <person name="Ambridge K."/>
            <person name="Leongamornlert D."/>
            <person name="McGuire S."/>
            <person name="Gilderthorp R."/>
            <person name="Griffiths C."/>
            <person name="Manthravadi D."/>
            <person name="Nichol S."/>
            <person name="Barker G."/>
            <person name="Whitehead S."/>
            <person name="Kay M."/>
            <person name="Brown J."/>
            <person name="Murnane C."/>
            <person name="Gray E."/>
            <person name="Humphries M."/>
            <person name="Sycamore N."/>
            <person name="Barker D."/>
            <person name="Saunders D."/>
            <person name="Wallis J."/>
            <person name="Babbage A."/>
            <person name="Hammond S."/>
            <person name="Mashreghi-Mohammadi M."/>
            <person name="Barr L."/>
            <person name="Martin S."/>
            <person name="Wray P."/>
            <person name="Ellington A."/>
            <person name="Matthews N."/>
            <person name="Ellwood M."/>
            <person name="Woodmansey R."/>
            <person name="Clark G."/>
            <person name="Cooper J."/>
            <person name="Tromans A."/>
            <person name="Grafham D."/>
            <person name="Skuce C."/>
            <person name="Pandian R."/>
            <person name="Andrews R."/>
            <person name="Harrison E."/>
            <person name="Kimberley A."/>
            <person name="Garnett J."/>
            <person name="Fosker N."/>
            <person name="Hall R."/>
            <person name="Garner P."/>
            <person name="Kelly D."/>
            <person name="Bird C."/>
            <person name="Palmer S."/>
            <person name="Gehring I."/>
            <person name="Berger A."/>
            <person name="Dooley C.M."/>
            <person name="Ersan-Urun Z."/>
            <person name="Eser C."/>
            <person name="Geiger H."/>
            <person name="Geisler M."/>
            <person name="Karotki L."/>
            <person name="Kirn A."/>
            <person name="Konantz J."/>
            <person name="Konantz M."/>
            <person name="Oberlander M."/>
            <person name="Rudolph-Geiger S."/>
            <person name="Teucke M."/>
            <person name="Lanz C."/>
            <person name="Raddatz G."/>
            <person name="Osoegawa K."/>
            <person name="Zhu B."/>
            <person name="Rapp A."/>
            <person name="Widaa S."/>
            <person name="Langford C."/>
            <person name="Yang F."/>
            <person name="Schuster S.C."/>
            <person name="Carter N.P."/>
            <person name="Harrow J."/>
            <person name="Ning Z."/>
            <person name="Herrero J."/>
            <person name="Searle S.M."/>
            <person name="Enright A."/>
            <person name="Geisler R."/>
            <person name="Plasterk R.H."/>
            <person name="Lee C."/>
            <person name="Westerfield M."/>
            <person name="de Jong P.J."/>
            <person name="Zon L.I."/>
            <person name="Postlethwait J.H."/>
            <person name="Nusslein-Volhard C."/>
            <person name="Hubbard T.J."/>
            <person name="Roest Crollius H."/>
            <person name="Rogers J."/>
            <person name="Stemple D.L."/>
        </authorList>
    </citation>
    <scope>NUCLEOTIDE SEQUENCE [LARGE SCALE GENOMIC DNA]</scope>
    <source>
        <strain>Tuebingen</strain>
    </source>
</reference>
<comment type="function">
    <text evidence="1">Postsynaptic scaffolding protein.</text>
</comment>
<comment type="subcellular location">
    <subcellularLocation>
        <location evidence="1">Postsynaptic cell membrane</location>
    </subcellularLocation>
</comment>
<keyword id="KW-1003">Cell membrane</keyword>
<keyword id="KW-0472">Membrane</keyword>
<keyword id="KW-0628">Postsynaptic cell membrane</keyword>
<keyword id="KW-1185">Reference proteome</keyword>
<keyword id="KW-0770">Synapse</keyword>
<feature type="chain" id="PRO_0000331626" description="Delphilin">
    <location>
        <begin position="1"/>
        <end position="1009"/>
    </location>
</feature>
<feature type="domain" description="PDZ" evidence="2">
    <location>
        <begin position="95"/>
        <end position="172"/>
    </location>
</feature>
<feature type="domain" description="FH2" evidence="3">
    <location>
        <begin position="629"/>
        <end position="1009"/>
    </location>
</feature>
<feature type="region of interest" description="Disordered" evidence="4">
    <location>
        <begin position="28"/>
        <end position="82"/>
    </location>
</feature>
<feature type="region of interest" description="Disordered" evidence="4">
    <location>
        <begin position="170"/>
        <end position="193"/>
    </location>
</feature>
<feature type="region of interest" description="Disordered" evidence="4">
    <location>
        <begin position="322"/>
        <end position="369"/>
    </location>
</feature>
<feature type="region of interest" description="Disordered" evidence="4">
    <location>
        <begin position="414"/>
        <end position="635"/>
    </location>
</feature>
<feature type="region of interest" description="Disordered" evidence="4">
    <location>
        <begin position="990"/>
        <end position="1009"/>
    </location>
</feature>
<feature type="compositionally biased region" description="Basic and acidic residues" evidence="4">
    <location>
        <begin position="44"/>
        <end position="53"/>
    </location>
</feature>
<feature type="compositionally biased region" description="Polar residues" evidence="4">
    <location>
        <begin position="322"/>
        <end position="332"/>
    </location>
</feature>
<feature type="compositionally biased region" description="Low complexity" evidence="4">
    <location>
        <begin position="334"/>
        <end position="352"/>
    </location>
</feature>
<feature type="compositionally biased region" description="Low complexity" evidence="4">
    <location>
        <begin position="427"/>
        <end position="439"/>
    </location>
</feature>
<feature type="compositionally biased region" description="Pro residues" evidence="4">
    <location>
        <begin position="441"/>
        <end position="455"/>
    </location>
</feature>
<feature type="compositionally biased region" description="Pro residues" evidence="4">
    <location>
        <begin position="462"/>
        <end position="477"/>
    </location>
</feature>
<feature type="compositionally biased region" description="Pro residues" evidence="4">
    <location>
        <begin position="484"/>
        <end position="493"/>
    </location>
</feature>
<feature type="compositionally biased region" description="Low complexity" evidence="4">
    <location>
        <begin position="521"/>
        <end position="535"/>
    </location>
</feature>
<feature type="compositionally biased region" description="Polar residues" evidence="4">
    <location>
        <begin position="557"/>
        <end position="602"/>
    </location>
</feature>
<feature type="compositionally biased region" description="Pro residues" evidence="4">
    <location>
        <begin position="607"/>
        <end position="628"/>
    </location>
</feature>
<protein>
    <recommendedName>
        <fullName>Delphilin</fullName>
    </recommendedName>
    <alternativeName>
        <fullName>Glutamate receptor, ionotropic, delta 2-interacting protein 1</fullName>
    </alternativeName>
</protein>
<proteinExistence type="inferred from homology"/>
<organism>
    <name type="scientific">Danio rerio</name>
    <name type="common">Zebrafish</name>
    <name type="synonym">Brachydanio rerio</name>
    <dbReference type="NCBI Taxonomy" id="7955"/>
    <lineage>
        <taxon>Eukaryota</taxon>
        <taxon>Metazoa</taxon>
        <taxon>Chordata</taxon>
        <taxon>Craniata</taxon>
        <taxon>Vertebrata</taxon>
        <taxon>Euteleostomi</taxon>
        <taxon>Actinopterygii</taxon>
        <taxon>Neopterygii</taxon>
        <taxon>Teleostei</taxon>
        <taxon>Ostariophysi</taxon>
        <taxon>Cypriniformes</taxon>
        <taxon>Danionidae</taxon>
        <taxon>Danioninae</taxon>
        <taxon>Danio</taxon>
    </lineage>
</organism>
<evidence type="ECO:0000250" key="1"/>
<evidence type="ECO:0000255" key="2">
    <source>
        <dbReference type="PROSITE-ProRule" id="PRU00143"/>
    </source>
</evidence>
<evidence type="ECO:0000255" key="3">
    <source>
        <dbReference type="PROSITE-ProRule" id="PRU00774"/>
    </source>
</evidence>
<evidence type="ECO:0000256" key="4">
    <source>
        <dbReference type="SAM" id="MobiDB-lite"/>
    </source>
</evidence>
<accession>Q6ZM86</accession>
<gene>
    <name type="primary">grid2ip</name>
    <name type="ORF">si:ch211-147h1.3</name>
</gene>
<dbReference type="EMBL" id="AL772266">
    <property type="protein sequence ID" value="CAE49895.1"/>
    <property type="molecule type" value="Genomic_DNA"/>
</dbReference>
<dbReference type="RefSeq" id="NP_001038368.1">
    <property type="nucleotide sequence ID" value="NM_001044903.1"/>
</dbReference>
<dbReference type="SMR" id="Q6ZM86"/>
<dbReference type="STRING" id="7955.ENSDARP00000116904"/>
<dbReference type="Ensembl" id="ENSDART00000161128">
    <property type="protein sequence ID" value="ENSDARP00000133025"/>
    <property type="gene ID" value="ENSDARG00000095603"/>
</dbReference>
<dbReference type="AGR" id="ZFIN:ZDB-GENE-040724-161"/>
<dbReference type="ZFIN" id="ZDB-GENE-040724-161">
    <property type="gene designation" value="grid2ipb"/>
</dbReference>
<dbReference type="eggNOG" id="KOG1922">
    <property type="taxonomic scope" value="Eukaryota"/>
</dbReference>
<dbReference type="eggNOG" id="KOG3528">
    <property type="taxonomic scope" value="Eukaryota"/>
</dbReference>
<dbReference type="eggNOG" id="KOG3589">
    <property type="taxonomic scope" value="Eukaryota"/>
</dbReference>
<dbReference type="HOGENOM" id="CLU_002818_0_0_1"/>
<dbReference type="InParanoid" id="Q6ZM86"/>
<dbReference type="OrthoDB" id="410721at2759"/>
<dbReference type="PhylomeDB" id="Q6ZM86"/>
<dbReference type="TreeFam" id="TF329416"/>
<dbReference type="PRO" id="PR:Q6ZM86"/>
<dbReference type="Proteomes" id="UP000000437">
    <property type="component" value="Alternate scaffold 12"/>
</dbReference>
<dbReference type="Proteomes" id="UP000000437">
    <property type="component" value="Chromosome 12"/>
</dbReference>
<dbReference type="Bgee" id="ENSDARG00000095603">
    <property type="expression patterns" value="Expressed in brain and 14 other cell types or tissues"/>
</dbReference>
<dbReference type="ExpressionAtlas" id="Q6ZM86">
    <property type="expression patterns" value="baseline and differential"/>
</dbReference>
<dbReference type="GO" id="GO:0045211">
    <property type="term" value="C:postsynaptic membrane"/>
    <property type="evidence" value="ECO:0007669"/>
    <property type="project" value="UniProtKB-SubCell"/>
</dbReference>
<dbReference type="CDD" id="cd07355">
    <property type="entry name" value="HN_L-delphilin-R2_like"/>
    <property type="match status" value="1"/>
</dbReference>
<dbReference type="CDD" id="cd06744">
    <property type="entry name" value="PDZ2_L-delphilin-like"/>
    <property type="match status" value="1"/>
</dbReference>
<dbReference type="Gene3D" id="1.20.1160.20">
    <property type="match status" value="1"/>
</dbReference>
<dbReference type="Gene3D" id="2.30.42.10">
    <property type="match status" value="1"/>
</dbReference>
<dbReference type="Gene3D" id="1.20.58.2220">
    <property type="entry name" value="Formin, FH2 domain"/>
    <property type="match status" value="1"/>
</dbReference>
<dbReference type="InterPro" id="IPR015425">
    <property type="entry name" value="FH2_Formin"/>
</dbReference>
<dbReference type="InterPro" id="IPR042201">
    <property type="entry name" value="FH2_Formin_sf"/>
</dbReference>
<dbReference type="InterPro" id="IPR051425">
    <property type="entry name" value="Formin_Homology"/>
</dbReference>
<dbReference type="InterPro" id="IPR001478">
    <property type="entry name" value="PDZ"/>
</dbReference>
<dbReference type="InterPro" id="IPR036034">
    <property type="entry name" value="PDZ_sf"/>
</dbReference>
<dbReference type="PANTHER" id="PTHR45725:SF12">
    <property type="entry name" value="DELPHILIN-RELATED"/>
    <property type="match status" value="1"/>
</dbReference>
<dbReference type="PANTHER" id="PTHR45725">
    <property type="entry name" value="FORMIN HOMOLOGY 2 FAMILY MEMBER"/>
    <property type="match status" value="1"/>
</dbReference>
<dbReference type="Pfam" id="PF02181">
    <property type="entry name" value="FH2"/>
    <property type="match status" value="1"/>
</dbReference>
<dbReference type="Pfam" id="PF00595">
    <property type="entry name" value="PDZ"/>
    <property type="match status" value="1"/>
</dbReference>
<dbReference type="PRINTS" id="PR01217">
    <property type="entry name" value="PRICHEXTENSN"/>
</dbReference>
<dbReference type="SMART" id="SM00498">
    <property type="entry name" value="FH2"/>
    <property type="match status" value="1"/>
</dbReference>
<dbReference type="SMART" id="SM00228">
    <property type="entry name" value="PDZ"/>
    <property type="match status" value="1"/>
</dbReference>
<dbReference type="SUPFAM" id="SSF101447">
    <property type="entry name" value="Formin homology 2 domain (FH2 domain)"/>
    <property type="match status" value="1"/>
</dbReference>
<dbReference type="SUPFAM" id="SSF50156">
    <property type="entry name" value="PDZ domain-like"/>
    <property type="match status" value="1"/>
</dbReference>
<dbReference type="PROSITE" id="PS51444">
    <property type="entry name" value="FH2"/>
    <property type="match status" value="1"/>
</dbReference>
<dbReference type="PROSITE" id="PS50106">
    <property type="entry name" value="PDZ"/>
    <property type="match status" value="1"/>
</dbReference>
<sequence length="1009" mass="113629">MFARIFIPKKHRQRFDEAVSQSLINRMCRSKSLGEPQNRLRRSRSQDHHERPQGSKRASSVPRDTGDEPAQNDRTLRKSNTMIPTQYVSGVNQRTIRVYRGKKSFGFTLRGHAPVWIDSVMPGSPAEACGLKTGDRILFLNGLDMRNCSHEKVVSMLQGSGAMPSLVVEEGPVDYPQSDSEPEETPSAPRSRSPALSSLQWVAEILPPSIRVHGRTFSQQLEHLLTLQERYTICKALETFFQHRNVDTLIVDVFPVLDTPAKQLIWQFIYQLLTYEEQEHCKTKIARFLGFKSAGNRKSGLSLTWTDSFPGPQFETYQQTVASPDSVDSNPYVSLDSPPASPLPSDELSPLPQRRKLFTFSRPPRSRDTDKFLDALSEQLGHRVNIVDDFKGGENDYEEMSFQDEQEVNMLPHELSSASSEDHSSSDDSTSVSYSSGSDHIPPPPQSPPPPPPPLQFTDSPSPLPITPEHLPQPPPAFQHHPIIAPPPPPPRPFLANRPSLHKVLPTREELRAQHSHPRRSSPQPSSQPILQLHQPKAHPILQSSPHTSPQPPHTSAQHTRLQHPSQSIYQSQQTTVPRTSPSLTKQKSLHSQPSQQSFEGTLSSKVPPPPPPPLPPPCDPPPLPKPSPKASDNNHMSVKRLRWEQLGDDPDYHKLSDMVKYLDLDLYFGTQRNSKPTFLPENLKKKDVVEILSHKKAYNASILIAHLKLAPKELRDILMTMSTERLEPAHIKQLLLYAPDDEEVKQFQHYDQDPAKLSEPDQFVLQMLLVPEYKTRLRSLLFKTTVQEKTEEMRAAYECIYKASLELKNSKRLAKILEFVLAMGNYLNNGQPKTNKTTGFKINFLTELNTTKTVDGKSTFLHILAKSLCQHFPELLGFSRDLITVPLAAKVNQRTITADLSDVHSTIQDIRTACVKIPATAEDRFAAVMSSFLENCHPAVQSLDSLQQRAMDEFHKVASYFGEDSKVTTTETFFGIFAEFISKFERALSETQGTENPKSPRIASPLAW</sequence>